<feature type="signal peptide" evidence="2">
    <location>
        <begin position="1"/>
        <end position="19"/>
    </location>
</feature>
<feature type="chain" id="PRO_0000171077" description="L-asparaginase 2">
    <location>
        <begin position="20"/>
        <end position="375"/>
    </location>
</feature>
<feature type="domain" description="Asparaginase/glutaminase" evidence="3">
    <location>
        <begin position="51"/>
        <end position="375"/>
    </location>
</feature>
<feature type="region of interest" description="Disordered" evidence="6">
    <location>
        <begin position="22"/>
        <end position="46"/>
    </location>
</feature>
<feature type="compositionally biased region" description="Basic and acidic residues" evidence="6">
    <location>
        <begin position="24"/>
        <end position="35"/>
    </location>
</feature>
<feature type="active site" description="O-isoaspartyl threonine intermediate" evidence="4 5">
    <location>
        <position position="61"/>
    </location>
</feature>
<feature type="binding site" evidence="1">
    <location>
        <position position="108"/>
    </location>
    <ligand>
        <name>substrate</name>
    </ligand>
</feature>
<feature type="binding site" evidence="1">
    <location>
        <begin position="141"/>
        <end position="142"/>
    </location>
    <ligand>
        <name>substrate</name>
    </ligand>
</feature>
<reference key="1">
    <citation type="journal article" date="1997" name="Microbiology">
        <title>A 32 kb nucleotide sequence from the region of the lincomycin-resistance gene (22 degrees-25 degrees) of the Bacillus subtilis chromosome and identification of the site of the lin-2 mutation.</title>
        <authorList>
            <person name="Kumano M."/>
            <person name="Tamakoshi A."/>
            <person name="Yamane K."/>
        </authorList>
    </citation>
    <scope>NUCLEOTIDE SEQUENCE [GENOMIC DNA]</scope>
    <source>
        <strain>168</strain>
    </source>
</reference>
<reference key="2">
    <citation type="journal article" date="1997" name="Nature">
        <title>The complete genome sequence of the Gram-positive bacterium Bacillus subtilis.</title>
        <authorList>
            <person name="Kunst F."/>
            <person name="Ogasawara N."/>
            <person name="Moszer I."/>
            <person name="Albertini A.M."/>
            <person name="Alloni G."/>
            <person name="Azevedo V."/>
            <person name="Bertero M.G."/>
            <person name="Bessieres P."/>
            <person name="Bolotin A."/>
            <person name="Borchert S."/>
            <person name="Borriss R."/>
            <person name="Boursier L."/>
            <person name="Brans A."/>
            <person name="Braun M."/>
            <person name="Brignell S.C."/>
            <person name="Bron S."/>
            <person name="Brouillet S."/>
            <person name="Bruschi C.V."/>
            <person name="Caldwell B."/>
            <person name="Capuano V."/>
            <person name="Carter N.M."/>
            <person name="Choi S.-K."/>
            <person name="Codani J.-J."/>
            <person name="Connerton I.F."/>
            <person name="Cummings N.J."/>
            <person name="Daniel R.A."/>
            <person name="Denizot F."/>
            <person name="Devine K.M."/>
            <person name="Duesterhoeft A."/>
            <person name="Ehrlich S.D."/>
            <person name="Emmerson P.T."/>
            <person name="Entian K.-D."/>
            <person name="Errington J."/>
            <person name="Fabret C."/>
            <person name="Ferrari E."/>
            <person name="Foulger D."/>
            <person name="Fritz C."/>
            <person name="Fujita M."/>
            <person name="Fujita Y."/>
            <person name="Fuma S."/>
            <person name="Galizzi A."/>
            <person name="Galleron N."/>
            <person name="Ghim S.-Y."/>
            <person name="Glaser P."/>
            <person name="Goffeau A."/>
            <person name="Golightly E.J."/>
            <person name="Grandi G."/>
            <person name="Guiseppi G."/>
            <person name="Guy B.J."/>
            <person name="Haga K."/>
            <person name="Haiech J."/>
            <person name="Harwood C.R."/>
            <person name="Henaut A."/>
            <person name="Hilbert H."/>
            <person name="Holsappel S."/>
            <person name="Hosono S."/>
            <person name="Hullo M.-F."/>
            <person name="Itaya M."/>
            <person name="Jones L.-M."/>
            <person name="Joris B."/>
            <person name="Karamata D."/>
            <person name="Kasahara Y."/>
            <person name="Klaerr-Blanchard M."/>
            <person name="Klein C."/>
            <person name="Kobayashi Y."/>
            <person name="Koetter P."/>
            <person name="Koningstein G."/>
            <person name="Krogh S."/>
            <person name="Kumano M."/>
            <person name="Kurita K."/>
            <person name="Lapidus A."/>
            <person name="Lardinois S."/>
            <person name="Lauber J."/>
            <person name="Lazarevic V."/>
            <person name="Lee S.-M."/>
            <person name="Levine A."/>
            <person name="Liu H."/>
            <person name="Masuda S."/>
            <person name="Mauel C."/>
            <person name="Medigue C."/>
            <person name="Medina N."/>
            <person name="Mellado R.P."/>
            <person name="Mizuno M."/>
            <person name="Moestl D."/>
            <person name="Nakai S."/>
            <person name="Noback M."/>
            <person name="Noone D."/>
            <person name="O'Reilly M."/>
            <person name="Ogawa K."/>
            <person name="Ogiwara A."/>
            <person name="Oudega B."/>
            <person name="Park S.-H."/>
            <person name="Parro V."/>
            <person name="Pohl T.M."/>
            <person name="Portetelle D."/>
            <person name="Porwollik S."/>
            <person name="Prescott A.M."/>
            <person name="Presecan E."/>
            <person name="Pujic P."/>
            <person name="Purnelle B."/>
            <person name="Rapoport G."/>
            <person name="Rey M."/>
            <person name="Reynolds S."/>
            <person name="Rieger M."/>
            <person name="Rivolta C."/>
            <person name="Rocha E."/>
            <person name="Roche B."/>
            <person name="Rose M."/>
            <person name="Sadaie Y."/>
            <person name="Sato T."/>
            <person name="Scanlan E."/>
            <person name="Schleich S."/>
            <person name="Schroeter R."/>
            <person name="Scoffone F."/>
            <person name="Sekiguchi J."/>
            <person name="Sekowska A."/>
            <person name="Seror S.J."/>
            <person name="Serror P."/>
            <person name="Shin B.-S."/>
            <person name="Soldo B."/>
            <person name="Sorokin A."/>
            <person name="Tacconi E."/>
            <person name="Takagi T."/>
            <person name="Takahashi H."/>
            <person name="Takemaru K."/>
            <person name="Takeuchi M."/>
            <person name="Tamakoshi A."/>
            <person name="Tanaka T."/>
            <person name="Terpstra P."/>
            <person name="Tognoni A."/>
            <person name="Tosato V."/>
            <person name="Uchiyama S."/>
            <person name="Vandenbol M."/>
            <person name="Vannier F."/>
            <person name="Vassarotti A."/>
            <person name="Viari A."/>
            <person name="Wambutt R."/>
            <person name="Wedler E."/>
            <person name="Wedler H."/>
            <person name="Weitzenegger T."/>
            <person name="Winters P."/>
            <person name="Wipat A."/>
            <person name="Yamamoto H."/>
            <person name="Yamane K."/>
            <person name="Yasumoto K."/>
            <person name="Yata K."/>
            <person name="Yoshida K."/>
            <person name="Yoshikawa H.-F."/>
            <person name="Zumstein E."/>
            <person name="Yoshikawa H."/>
            <person name="Danchin A."/>
        </authorList>
    </citation>
    <scope>NUCLEOTIDE SEQUENCE [LARGE SCALE GENOMIC DNA]</scope>
    <source>
        <strain>168</strain>
    </source>
</reference>
<reference key="3">
    <citation type="journal article" date="2002" name="J. Bacteriol.">
        <title>Bacillus subtilis 168 contains two differentially regulated genes encoding L-asparaginase.</title>
        <authorList>
            <person name="Fisher S.H."/>
            <person name="Wray L.V. Jr."/>
        </authorList>
    </citation>
    <scope>FUNCTION</scope>
    <scope>INDUCTION</scope>
</reference>
<dbReference type="EC" id="3.5.1.1"/>
<dbReference type="EMBL" id="AB000617">
    <property type="protein sequence ID" value="BAA22230.1"/>
    <property type="molecule type" value="Genomic_DNA"/>
</dbReference>
<dbReference type="EMBL" id="AL009126">
    <property type="protein sequence ID" value="CAB12063.1"/>
    <property type="molecule type" value="Genomic_DNA"/>
</dbReference>
<dbReference type="PIR" id="F69754">
    <property type="entry name" value="F69754"/>
</dbReference>
<dbReference type="RefSeq" id="NP_388151.1">
    <property type="nucleotide sequence ID" value="NC_000964.3"/>
</dbReference>
<dbReference type="RefSeq" id="WP_003246337.1">
    <property type="nucleotide sequence ID" value="NZ_OZ025638.1"/>
</dbReference>
<dbReference type="SMR" id="O34482"/>
<dbReference type="FunCoup" id="O34482">
    <property type="interactions" value="140"/>
</dbReference>
<dbReference type="STRING" id="224308.BSU02690"/>
<dbReference type="PaxDb" id="224308-BSU02690"/>
<dbReference type="EnsemblBacteria" id="CAB12063">
    <property type="protein sequence ID" value="CAB12063"/>
    <property type="gene ID" value="BSU_02690"/>
</dbReference>
<dbReference type="GeneID" id="938392"/>
<dbReference type="KEGG" id="bsu:BSU02690"/>
<dbReference type="PATRIC" id="fig|224308.179.peg.279"/>
<dbReference type="eggNOG" id="COG0252">
    <property type="taxonomic scope" value="Bacteria"/>
</dbReference>
<dbReference type="InParanoid" id="O34482"/>
<dbReference type="OrthoDB" id="9788068at2"/>
<dbReference type="PhylomeDB" id="O34482"/>
<dbReference type="BioCyc" id="BSUB:BSU02690-MONOMER"/>
<dbReference type="Proteomes" id="UP000001570">
    <property type="component" value="Chromosome"/>
</dbReference>
<dbReference type="GO" id="GO:0042597">
    <property type="term" value="C:periplasmic space"/>
    <property type="evidence" value="ECO:0000318"/>
    <property type="project" value="GO_Central"/>
</dbReference>
<dbReference type="GO" id="GO:0004067">
    <property type="term" value="F:asparaginase activity"/>
    <property type="evidence" value="ECO:0000318"/>
    <property type="project" value="GO_Central"/>
</dbReference>
<dbReference type="GO" id="GO:0006530">
    <property type="term" value="P:asparagine catabolic process"/>
    <property type="evidence" value="ECO:0000318"/>
    <property type="project" value="GO_Central"/>
</dbReference>
<dbReference type="CDD" id="cd08964">
    <property type="entry name" value="L-asparaginase_II"/>
    <property type="match status" value="1"/>
</dbReference>
<dbReference type="FunFam" id="3.40.50.1170:FF:000001">
    <property type="entry name" value="L-asparaginase 2"/>
    <property type="match status" value="1"/>
</dbReference>
<dbReference type="Gene3D" id="3.40.50.40">
    <property type="match status" value="1"/>
</dbReference>
<dbReference type="Gene3D" id="3.40.50.1170">
    <property type="entry name" value="L-asparaginase, N-terminal domain"/>
    <property type="match status" value="1"/>
</dbReference>
<dbReference type="InterPro" id="IPR004550">
    <property type="entry name" value="AsnASE_II"/>
</dbReference>
<dbReference type="InterPro" id="IPR036152">
    <property type="entry name" value="Asp/glu_Ase-like_sf"/>
</dbReference>
<dbReference type="InterPro" id="IPR006034">
    <property type="entry name" value="Asparaginase/glutaminase-like"/>
</dbReference>
<dbReference type="InterPro" id="IPR020827">
    <property type="entry name" value="Asparaginase/glutaminase_AS1"/>
</dbReference>
<dbReference type="InterPro" id="IPR027475">
    <property type="entry name" value="Asparaginase/glutaminase_AS2"/>
</dbReference>
<dbReference type="InterPro" id="IPR040919">
    <property type="entry name" value="Asparaginase_C"/>
</dbReference>
<dbReference type="InterPro" id="IPR027473">
    <property type="entry name" value="L-asparaginase_C"/>
</dbReference>
<dbReference type="InterPro" id="IPR027474">
    <property type="entry name" value="L-asparaginase_N"/>
</dbReference>
<dbReference type="InterPro" id="IPR037152">
    <property type="entry name" value="L-asparaginase_N_sf"/>
</dbReference>
<dbReference type="NCBIfam" id="TIGR00520">
    <property type="entry name" value="asnASE_II"/>
    <property type="match status" value="1"/>
</dbReference>
<dbReference type="PANTHER" id="PTHR11707:SF28">
    <property type="entry name" value="60 KDA LYSOPHOSPHOLIPASE"/>
    <property type="match status" value="1"/>
</dbReference>
<dbReference type="PANTHER" id="PTHR11707">
    <property type="entry name" value="L-ASPARAGINASE"/>
    <property type="match status" value="1"/>
</dbReference>
<dbReference type="Pfam" id="PF00710">
    <property type="entry name" value="Asparaginase"/>
    <property type="match status" value="1"/>
</dbReference>
<dbReference type="Pfam" id="PF17763">
    <property type="entry name" value="Asparaginase_C"/>
    <property type="match status" value="1"/>
</dbReference>
<dbReference type="PIRSF" id="PIRSF001220">
    <property type="entry name" value="L-ASNase_gatD"/>
    <property type="match status" value="1"/>
</dbReference>
<dbReference type="PIRSF" id="PIRSF500176">
    <property type="entry name" value="L_ASNase"/>
    <property type="match status" value="1"/>
</dbReference>
<dbReference type="PRINTS" id="PR00139">
    <property type="entry name" value="ASNGLNASE"/>
</dbReference>
<dbReference type="SMART" id="SM00870">
    <property type="entry name" value="Asparaginase"/>
    <property type="match status" value="1"/>
</dbReference>
<dbReference type="SUPFAM" id="SSF53774">
    <property type="entry name" value="Glutaminase/Asparaginase"/>
    <property type="match status" value="1"/>
</dbReference>
<dbReference type="PROSITE" id="PS00144">
    <property type="entry name" value="ASN_GLN_ASE_1"/>
    <property type="match status" value="1"/>
</dbReference>
<dbReference type="PROSITE" id="PS00917">
    <property type="entry name" value="ASN_GLN_ASE_2"/>
    <property type="match status" value="1"/>
</dbReference>
<dbReference type="PROSITE" id="PS51732">
    <property type="entry name" value="ASN_GLN_ASE_3"/>
    <property type="match status" value="1"/>
</dbReference>
<accession>O34482</accession>
<organism>
    <name type="scientific">Bacillus subtilis (strain 168)</name>
    <dbReference type="NCBI Taxonomy" id="224308"/>
    <lineage>
        <taxon>Bacteria</taxon>
        <taxon>Bacillati</taxon>
        <taxon>Bacillota</taxon>
        <taxon>Bacilli</taxon>
        <taxon>Bacillales</taxon>
        <taxon>Bacillaceae</taxon>
        <taxon>Bacillus</taxon>
    </lineage>
</organism>
<comment type="function">
    <text evidence="7">Catalyzes the conversion of L-asparagine to L-aspartate and ammonium.</text>
</comment>
<comment type="catalytic activity">
    <reaction>
        <text>L-asparagine + H2O = L-aspartate + NH4(+)</text>
        <dbReference type="Rhea" id="RHEA:21016"/>
        <dbReference type="ChEBI" id="CHEBI:15377"/>
        <dbReference type="ChEBI" id="CHEBI:28938"/>
        <dbReference type="ChEBI" id="CHEBI:29991"/>
        <dbReference type="ChEBI" id="CHEBI:58048"/>
        <dbReference type="EC" id="3.5.1.1"/>
    </reaction>
</comment>
<comment type="subunit">
    <text evidence="1">Homotetramer.</text>
</comment>
<comment type="induction">
    <text evidence="7">Expression is induced during limiting-nitrogen conditions by the nitrogen regulatory factor TnrA.</text>
</comment>
<comment type="miscellaneous">
    <text>B.subtilis contains two L-asparaginase isoenzymes: L-asparaginase I, a low-affinity enzyme located in the cytoplasm, and L-asparaginase II, a high-affinity secreted enzyme.</text>
</comment>
<comment type="similarity">
    <text evidence="8">Belongs to the asparaginase 1 family.</text>
</comment>
<evidence type="ECO:0000250" key="1"/>
<evidence type="ECO:0000255" key="2"/>
<evidence type="ECO:0000255" key="3">
    <source>
        <dbReference type="PROSITE-ProRule" id="PRU01068"/>
    </source>
</evidence>
<evidence type="ECO:0000255" key="4">
    <source>
        <dbReference type="PROSITE-ProRule" id="PRU10099"/>
    </source>
</evidence>
<evidence type="ECO:0000255" key="5">
    <source>
        <dbReference type="PROSITE-ProRule" id="PRU10100"/>
    </source>
</evidence>
<evidence type="ECO:0000256" key="6">
    <source>
        <dbReference type="SAM" id="MobiDB-lite"/>
    </source>
</evidence>
<evidence type="ECO:0000269" key="7">
    <source>
    </source>
</evidence>
<evidence type="ECO:0000305" key="8"/>
<name>ASPG2_BACSU</name>
<gene>
    <name type="primary">ansZ</name>
    <name type="synonym">yccC</name>
    <name type="ordered locus">BSU02690</name>
</gene>
<proteinExistence type="evidence at transcript level"/>
<protein>
    <recommendedName>
        <fullName>L-asparaginase 2</fullName>
        <shortName>L-ASNase 2</shortName>
        <ecNumber>3.5.1.1</ecNumber>
    </recommendedName>
    <alternativeName>
        <fullName>L-asparagine amidohydrolase 2</fullName>
    </alternativeName>
</protein>
<sequence length="375" mass="40103">MKKQRMLVLFTALLFVFTGCSHSPETKESPKEKAQTQKVSSASASEKKDLPNIRILATGGTIAGADQSKTSTTEYKAGVVGVESLIEAVPEMKDIANVSGEQIVNVGSTNIDNKILLKLAKRINHLLASDDVDGIVVTHGTDTLEETAYFLNLTVKSDKPVVIVGSMRPSTAISADGPSNLYNAVKVAGAPEAKGKGTLVVLNDRIASARYVTKTNTTTTDTFKSEEMGFVGTIADDIYFNNEITRKHTKDTDFSVSNLDELPQVDIIYGYQNDGSYLFDAAVKAGAKGIVFAGSGNGSLSDAAEKGADSAVKKGVTVVRSTRTGNGVVTPNQDYAEKDLLASNSLNPQKARMLLMLALTKTNDPQKIQAYFNEY</sequence>
<keyword id="KW-0378">Hydrolase</keyword>
<keyword id="KW-1185">Reference proteome</keyword>
<keyword id="KW-0732">Signal</keyword>